<comment type="function">
    <text evidence="1">Hydrolyzes ribosome-free peptidyl-tRNAs (with 1 or more amino acids incorporated), which drop off the ribosome during protein synthesis, or as a result of ribosome stalling.</text>
</comment>
<comment type="function">
    <text evidence="1">Catalyzes the release of premature peptidyl moieties from peptidyl-tRNA molecules trapped in stalled 50S ribosomal subunits, and thus maintains levels of free tRNAs and 50S ribosomes.</text>
</comment>
<comment type="catalytic activity">
    <reaction evidence="1">
        <text>an N-acyl-L-alpha-aminoacyl-tRNA + H2O = an N-acyl-L-amino acid + a tRNA + H(+)</text>
        <dbReference type="Rhea" id="RHEA:54448"/>
        <dbReference type="Rhea" id="RHEA-COMP:10123"/>
        <dbReference type="Rhea" id="RHEA-COMP:13883"/>
        <dbReference type="ChEBI" id="CHEBI:15377"/>
        <dbReference type="ChEBI" id="CHEBI:15378"/>
        <dbReference type="ChEBI" id="CHEBI:59874"/>
        <dbReference type="ChEBI" id="CHEBI:78442"/>
        <dbReference type="ChEBI" id="CHEBI:138191"/>
        <dbReference type="EC" id="3.1.1.29"/>
    </reaction>
</comment>
<comment type="subunit">
    <text evidence="1">Monomer.</text>
</comment>
<comment type="subcellular location">
    <subcellularLocation>
        <location evidence="1">Cytoplasm</location>
    </subcellularLocation>
</comment>
<comment type="similarity">
    <text evidence="1">Belongs to the PTH family.</text>
</comment>
<sequence length="193" mass="20930">MAIKLIVGLGNPGQEYMFTRHNAGFWFVLHLAQQFNITLAPDKKFHGVTGRGQIHGHDVRLLMPLTFMNKSGQSVVPMVKFYGIDNDELLIAHDELDIPAGSIKLKTDGGHGGHNGLRDITPHIGNDFHRLRVGIGHPGHKSKVSGHVLSKAAPDEQIAIDSALSAAFDALPLLLGGDVEKARSQINGFKLPE</sequence>
<feature type="chain" id="PRO_0000264084" description="Peptidyl-tRNA hydrolase">
    <location>
        <begin position="1"/>
        <end position="193"/>
    </location>
</feature>
<feature type="active site" description="Proton acceptor" evidence="1">
    <location>
        <position position="21"/>
    </location>
</feature>
<feature type="binding site" evidence="1">
    <location>
        <position position="16"/>
    </location>
    <ligand>
        <name>tRNA</name>
        <dbReference type="ChEBI" id="CHEBI:17843"/>
    </ligand>
</feature>
<feature type="binding site" evidence="1">
    <location>
        <position position="67"/>
    </location>
    <ligand>
        <name>tRNA</name>
        <dbReference type="ChEBI" id="CHEBI:17843"/>
    </ligand>
</feature>
<feature type="binding site" evidence="1">
    <location>
        <position position="69"/>
    </location>
    <ligand>
        <name>tRNA</name>
        <dbReference type="ChEBI" id="CHEBI:17843"/>
    </ligand>
</feature>
<feature type="binding site" evidence="1">
    <location>
        <position position="115"/>
    </location>
    <ligand>
        <name>tRNA</name>
        <dbReference type="ChEBI" id="CHEBI:17843"/>
    </ligand>
</feature>
<feature type="site" description="Discriminates between blocked and unblocked aminoacyl-tRNA" evidence="1">
    <location>
        <position position="11"/>
    </location>
</feature>
<feature type="site" description="Stabilizes the basic form of H active site to accept a proton" evidence="1">
    <location>
        <position position="94"/>
    </location>
</feature>
<dbReference type="EC" id="3.1.1.29" evidence="1"/>
<dbReference type="EMBL" id="CP000323">
    <property type="protein sequence ID" value="ABE73967.1"/>
    <property type="molecule type" value="Genomic_DNA"/>
</dbReference>
<dbReference type="RefSeq" id="WP_011512556.1">
    <property type="nucleotide sequence ID" value="NC_007969.1"/>
</dbReference>
<dbReference type="SMR" id="Q1QED6"/>
<dbReference type="STRING" id="335284.Pcryo_0183"/>
<dbReference type="KEGG" id="pcr:Pcryo_0183"/>
<dbReference type="eggNOG" id="COG0193">
    <property type="taxonomic scope" value="Bacteria"/>
</dbReference>
<dbReference type="HOGENOM" id="CLU_062456_3_1_6"/>
<dbReference type="Proteomes" id="UP000002425">
    <property type="component" value="Chromosome"/>
</dbReference>
<dbReference type="GO" id="GO:0005737">
    <property type="term" value="C:cytoplasm"/>
    <property type="evidence" value="ECO:0007669"/>
    <property type="project" value="UniProtKB-SubCell"/>
</dbReference>
<dbReference type="GO" id="GO:0004045">
    <property type="term" value="F:peptidyl-tRNA hydrolase activity"/>
    <property type="evidence" value="ECO:0007669"/>
    <property type="project" value="UniProtKB-UniRule"/>
</dbReference>
<dbReference type="GO" id="GO:0000049">
    <property type="term" value="F:tRNA binding"/>
    <property type="evidence" value="ECO:0007669"/>
    <property type="project" value="UniProtKB-UniRule"/>
</dbReference>
<dbReference type="GO" id="GO:0006515">
    <property type="term" value="P:protein quality control for misfolded or incompletely synthesized proteins"/>
    <property type="evidence" value="ECO:0007669"/>
    <property type="project" value="UniProtKB-UniRule"/>
</dbReference>
<dbReference type="GO" id="GO:0072344">
    <property type="term" value="P:rescue of stalled ribosome"/>
    <property type="evidence" value="ECO:0007669"/>
    <property type="project" value="UniProtKB-UniRule"/>
</dbReference>
<dbReference type="CDD" id="cd00462">
    <property type="entry name" value="PTH"/>
    <property type="match status" value="1"/>
</dbReference>
<dbReference type="FunFam" id="3.40.50.1470:FF:000001">
    <property type="entry name" value="Peptidyl-tRNA hydrolase"/>
    <property type="match status" value="1"/>
</dbReference>
<dbReference type="Gene3D" id="3.40.50.1470">
    <property type="entry name" value="Peptidyl-tRNA hydrolase"/>
    <property type="match status" value="1"/>
</dbReference>
<dbReference type="HAMAP" id="MF_00083">
    <property type="entry name" value="Pept_tRNA_hydro_bact"/>
    <property type="match status" value="1"/>
</dbReference>
<dbReference type="InterPro" id="IPR001328">
    <property type="entry name" value="Pept_tRNA_hydro"/>
</dbReference>
<dbReference type="InterPro" id="IPR018171">
    <property type="entry name" value="Pept_tRNA_hydro_CS"/>
</dbReference>
<dbReference type="InterPro" id="IPR036416">
    <property type="entry name" value="Pept_tRNA_hydro_sf"/>
</dbReference>
<dbReference type="NCBIfam" id="TIGR00447">
    <property type="entry name" value="pth"/>
    <property type="match status" value="1"/>
</dbReference>
<dbReference type="PANTHER" id="PTHR17224">
    <property type="entry name" value="PEPTIDYL-TRNA HYDROLASE"/>
    <property type="match status" value="1"/>
</dbReference>
<dbReference type="PANTHER" id="PTHR17224:SF1">
    <property type="entry name" value="PEPTIDYL-TRNA HYDROLASE"/>
    <property type="match status" value="1"/>
</dbReference>
<dbReference type="Pfam" id="PF01195">
    <property type="entry name" value="Pept_tRNA_hydro"/>
    <property type="match status" value="1"/>
</dbReference>
<dbReference type="SUPFAM" id="SSF53178">
    <property type="entry name" value="Peptidyl-tRNA hydrolase-like"/>
    <property type="match status" value="1"/>
</dbReference>
<dbReference type="PROSITE" id="PS01196">
    <property type="entry name" value="PEPT_TRNA_HYDROL_2"/>
    <property type="match status" value="1"/>
</dbReference>
<name>PTH_PSYCK</name>
<evidence type="ECO:0000255" key="1">
    <source>
        <dbReference type="HAMAP-Rule" id="MF_00083"/>
    </source>
</evidence>
<gene>
    <name evidence="1" type="primary">pth</name>
    <name type="ordered locus">Pcryo_0183</name>
</gene>
<protein>
    <recommendedName>
        <fullName evidence="1">Peptidyl-tRNA hydrolase</fullName>
        <shortName evidence="1">Pth</shortName>
        <ecNumber evidence="1">3.1.1.29</ecNumber>
    </recommendedName>
</protein>
<keyword id="KW-0963">Cytoplasm</keyword>
<keyword id="KW-0378">Hydrolase</keyword>
<keyword id="KW-0694">RNA-binding</keyword>
<keyword id="KW-0820">tRNA-binding</keyword>
<proteinExistence type="inferred from homology"/>
<organism>
    <name type="scientific">Psychrobacter cryohalolentis (strain ATCC BAA-1226 / DSM 17306 / VKM B-2378 / K5)</name>
    <dbReference type="NCBI Taxonomy" id="335284"/>
    <lineage>
        <taxon>Bacteria</taxon>
        <taxon>Pseudomonadati</taxon>
        <taxon>Pseudomonadota</taxon>
        <taxon>Gammaproteobacteria</taxon>
        <taxon>Moraxellales</taxon>
        <taxon>Moraxellaceae</taxon>
        <taxon>Psychrobacter</taxon>
    </lineage>
</organism>
<accession>Q1QED6</accession>
<reference key="1">
    <citation type="submission" date="2006-03" db="EMBL/GenBank/DDBJ databases">
        <title>Complete sequence of chromosome of Psychrobacter cryohalolentis K5.</title>
        <authorList>
            <consortium name="US DOE Joint Genome Institute"/>
            <person name="Copeland A."/>
            <person name="Lucas S."/>
            <person name="Lapidus A."/>
            <person name="Barry K."/>
            <person name="Detter J.C."/>
            <person name="Glavina T."/>
            <person name="Hammon N."/>
            <person name="Israni S."/>
            <person name="Dalin E."/>
            <person name="Tice H."/>
            <person name="Pitluck S."/>
            <person name="Brettin T."/>
            <person name="Bruce D."/>
            <person name="Han C."/>
            <person name="Tapia R."/>
            <person name="Sims D.R."/>
            <person name="Gilna P."/>
            <person name="Schmutz J."/>
            <person name="Larimer F."/>
            <person name="Land M."/>
            <person name="Hauser L."/>
            <person name="Kyrpides N."/>
            <person name="Kim E."/>
            <person name="Richardson P."/>
        </authorList>
    </citation>
    <scope>NUCLEOTIDE SEQUENCE [LARGE SCALE GENOMIC DNA]</scope>
    <source>
        <strain>ATCC BAA-1226 / DSM 17306 / VKM B-2378 / K5</strain>
    </source>
</reference>